<accession>Q92QD3</accession>
<keyword id="KW-1185">Reference proteome</keyword>
<dbReference type="EMBL" id="AL591688">
    <property type="protein sequence ID" value="CAC45977.1"/>
    <property type="molecule type" value="Genomic_DNA"/>
</dbReference>
<dbReference type="RefSeq" id="NP_385504.1">
    <property type="nucleotide sequence ID" value="NC_003047.1"/>
</dbReference>
<dbReference type="RefSeq" id="WP_003536733.1">
    <property type="nucleotide sequence ID" value="NC_003047.1"/>
</dbReference>
<dbReference type="SMR" id="Q92QD3"/>
<dbReference type="EnsemblBacteria" id="CAC45977">
    <property type="protein sequence ID" value="CAC45977"/>
    <property type="gene ID" value="SMc01266"/>
</dbReference>
<dbReference type="KEGG" id="sme:SMc01266"/>
<dbReference type="PATRIC" id="fig|266834.11.peg.2817"/>
<dbReference type="eggNOG" id="COG2718">
    <property type="taxonomic scope" value="Bacteria"/>
</dbReference>
<dbReference type="HOGENOM" id="CLU_049702_0_0_5"/>
<dbReference type="OrthoDB" id="9788289at2"/>
<dbReference type="Proteomes" id="UP000001976">
    <property type="component" value="Chromosome"/>
</dbReference>
<dbReference type="HAMAP" id="MF_01232">
    <property type="entry name" value="UPF0229"/>
    <property type="match status" value="1"/>
</dbReference>
<dbReference type="InterPro" id="IPR006698">
    <property type="entry name" value="UPF0229"/>
</dbReference>
<dbReference type="NCBIfam" id="NF003707">
    <property type="entry name" value="PRK05325.1-2"/>
    <property type="match status" value="1"/>
</dbReference>
<dbReference type="NCBIfam" id="NF003708">
    <property type="entry name" value="PRK05325.1-3"/>
    <property type="match status" value="1"/>
</dbReference>
<dbReference type="PANTHER" id="PTHR30510">
    <property type="entry name" value="UPF0229 PROTEIN YEAH"/>
    <property type="match status" value="1"/>
</dbReference>
<dbReference type="PANTHER" id="PTHR30510:SF2">
    <property type="entry name" value="UPF0229 PROTEIN YEAH"/>
    <property type="match status" value="1"/>
</dbReference>
<dbReference type="Pfam" id="PF04285">
    <property type="entry name" value="DUF444"/>
    <property type="match status" value="1"/>
</dbReference>
<gene>
    <name type="ordered locus">R01398</name>
    <name type="ORF">SMc01266</name>
</gene>
<name>Y1398_RHIME</name>
<reference key="1">
    <citation type="journal article" date="2001" name="Proc. Natl. Acad. Sci. U.S.A.">
        <title>Analysis of the chromosome sequence of the legume symbiont Sinorhizobium meliloti strain 1021.</title>
        <authorList>
            <person name="Capela D."/>
            <person name="Barloy-Hubler F."/>
            <person name="Gouzy J."/>
            <person name="Bothe G."/>
            <person name="Ampe F."/>
            <person name="Batut J."/>
            <person name="Boistard P."/>
            <person name="Becker A."/>
            <person name="Boutry M."/>
            <person name="Cadieu E."/>
            <person name="Dreano S."/>
            <person name="Gloux S."/>
            <person name="Godrie T."/>
            <person name="Goffeau A."/>
            <person name="Kahn D."/>
            <person name="Kiss E."/>
            <person name="Lelaure V."/>
            <person name="Masuy D."/>
            <person name="Pohl T."/>
            <person name="Portetelle D."/>
            <person name="Puehler A."/>
            <person name="Purnelle B."/>
            <person name="Ramsperger U."/>
            <person name="Renard C."/>
            <person name="Thebault P."/>
            <person name="Vandenbol M."/>
            <person name="Weidner S."/>
            <person name="Galibert F."/>
        </authorList>
    </citation>
    <scope>NUCLEOTIDE SEQUENCE [LARGE SCALE GENOMIC DNA]</scope>
    <source>
        <strain>1021</strain>
    </source>
</reference>
<reference key="2">
    <citation type="journal article" date="2001" name="Science">
        <title>The composite genome of the legume symbiont Sinorhizobium meliloti.</title>
        <authorList>
            <person name="Galibert F."/>
            <person name="Finan T.M."/>
            <person name="Long S.R."/>
            <person name="Puehler A."/>
            <person name="Abola P."/>
            <person name="Ampe F."/>
            <person name="Barloy-Hubler F."/>
            <person name="Barnett M.J."/>
            <person name="Becker A."/>
            <person name="Boistard P."/>
            <person name="Bothe G."/>
            <person name="Boutry M."/>
            <person name="Bowser L."/>
            <person name="Buhrmester J."/>
            <person name="Cadieu E."/>
            <person name="Capela D."/>
            <person name="Chain P."/>
            <person name="Cowie A."/>
            <person name="Davis R.W."/>
            <person name="Dreano S."/>
            <person name="Federspiel N.A."/>
            <person name="Fisher R.F."/>
            <person name="Gloux S."/>
            <person name="Godrie T."/>
            <person name="Goffeau A."/>
            <person name="Golding B."/>
            <person name="Gouzy J."/>
            <person name="Gurjal M."/>
            <person name="Hernandez-Lucas I."/>
            <person name="Hong A."/>
            <person name="Huizar L."/>
            <person name="Hyman R.W."/>
            <person name="Jones T."/>
            <person name="Kahn D."/>
            <person name="Kahn M.L."/>
            <person name="Kalman S."/>
            <person name="Keating D.H."/>
            <person name="Kiss E."/>
            <person name="Komp C."/>
            <person name="Lelaure V."/>
            <person name="Masuy D."/>
            <person name="Palm C."/>
            <person name="Peck M.C."/>
            <person name="Pohl T.M."/>
            <person name="Portetelle D."/>
            <person name="Purnelle B."/>
            <person name="Ramsperger U."/>
            <person name="Surzycki R."/>
            <person name="Thebault P."/>
            <person name="Vandenbol M."/>
            <person name="Vorhoelter F.J."/>
            <person name="Weidner S."/>
            <person name="Wells D.H."/>
            <person name="Wong K."/>
            <person name="Yeh K.-C."/>
            <person name="Batut J."/>
        </authorList>
    </citation>
    <scope>NUCLEOTIDE SEQUENCE [LARGE SCALE GENOMIC DNA]</scope>
    <source>
        <strain>1021</strain>
    </source>
</reference>
<proteinExistence type="inferred from homology"/>
<sequence length="438" mass="50527">MPNFIDRRLNPKDKSLGNRQRFLKRAREELKRTIKERVKSGKIADVDAEQNVSMPARGVNEPAFQPDSNSGERRHVLPGNREFAAGDRIPKRGSGGGAGNAGAGTGQSEDEFQFVLSREEVLDLFFEDLELPDMVKLNLKESVTFKRRRAGFSASGSPTNINVGRTMRNSYGRRIALRRPSRREIEALADEIAGLETEPRGRIKHRQRLEELRQKLDRLERRRRRIPYVDPVDIRFNRFEPQPLPNASAVMFCLMDVSASMGEREKDLAKRFFVLLHLFLKRRYERIDIVFIRHTDEAGEVDENTFFYSKQSGGTVVSTALEEMLRVIRERYPAHEWNIYAAQASDGENISGDSERCASLLHDELMGLCQYYAYVEIIDERETEIFGTTDNGTSLWRAYRTVDGEWPNFQMTRIAKPADIYPVFRKLFGKQPEMQLRK</sequence>
<protein>
    <recommendedName>
        <fullName evidence="1">UPF0229 protein R01398</fullName>
    </recommendedName>
</protein>
<evidence type="ECO:0000255" key="1">
    <source>
        <dbReference type="HAMAP-Rule" id="MF_01232"/>
    </source>
</evidence>
<evidence type="ECO:0000256" key="2">
    <source>
        <dbReference type="SAM" id="MobiDB-lite"/>
    </source>
</evidence>
<organism>
    <name type="scientific">Rhizobium meliloti (strain 1021)</name>
    <name type="common">Ensifer meliloti</name>
    <name type="synonym">Sinorhizobium meliloti</name>
    <dbReference type="NCBI Taxonomy" id="266834"/>
    <lineage>
        <taxon>Bacteria</taxon>
        <taxon>Pseudomonadati</taxon>
        <taxon>Pseudomonadota</taxon>
        <taxon>Alphaproteobacteria</taxon>
        <taxon>Hyphomicrobiales</taxon>
        <taxon>Rhizobiaceae</taxon>
        <taxon>Sinorhizobium/Ensifer group</taxon>
        <taxon>Sinorhizobium</taxon>
    </lineage>
</organism>
<feature type="chain" id="PRO_0000068203" description="UPF0229 protein R01398">
    <location>
        <begin position="1"/>
        <end position="438"/>
    </location>
</feature>
<feature type="region of interest" description="Disordered" evidence="2">
    <location>
        <begin position="55"/>
        <end position="107"/>
    </location>
</feature>
<feature type="compositionally biased region" description="Gly residues" evidence="2">
    <location>
        <begin position="93"/>
        <end position="105"/>
    </location>
</feature>
<comment type="similarity">
    <text evidence="1">Belongs to the UPF0229 family.</text>
</comment>